<comment type="function">
    <text evidence="1">Component of the mitochondrial ribosome (mitoribosome), a dedicated translation machinery responsible for the synthesis of mitochondrial genome-encoded proteins, including at least some of the essential transmembrane subunits of the mitochondrial respiratory chain. The mitoribosomes are attached to the mitochondrial inner membrane and translation products are cotranslationally integrated into the membrane. mL67/MHR1 also has extraribosomal functions, being involved in regulation of mitochondrial DNA recombination, maintenance and repair, and generation of homoplasmic cells. mL67/MHR1 also acts as transcription factor involved in regulation of RNA polymerase II-dependent transcription.</text>
</comment>
<comment type="subunit">
    <text evidence="1">Component of the mitochondrial large ribosomal subunit (mt-LSU).</text>
</comment>
<comment type="subcellular location">
    <subcellularLocation>
        <location evidence="1">Nucleus</location>
    </subcellularLocation>
    <subcellularLocation>
        <location evidence="1">Mitochondrion</location>
    </subcellularLocation>
</comment>
<comment type="similarity">
    <text evidence="2">Belongs to the mitochondrion-specific ribosomal protein mL67 family.</text>
</comment>
<feature type="chain" id="PRO_0000255962" description="Large ribosomal subunit protein mL67">
    <location>
        <begin position="1"/>
        <end position="239"/>
    </location>
</feature>
<gene>
    <name type="primary">MHR1</name>
    <name type="ordered locus">CAALFM_C105270CA</name>
    <name type="ORF">CaO19.439</name>
    <name type="ORF">CaO19.8069</name>
</gene>
<sequence length="239" mass="28356">MAMRTRAEKRMRKFLIEQLKTRQQNGARIAQGKKSEHELIKNNLGPQVFVFRNLFSGQVLYSQVPAYHENQINQQFLSPNWQNRKPSRRQDLWKIMCVVNFNNYEYAIAAYKGLVDLRKTRDVVQKKEANEMRKKNDDGNIWYSGQFRPTYTQEAVADLTHVIDEFELEGTKIFWANEWHRGDDKHWRADLVEHDKLPVYDPRHQTVLLDIMREKAIEAFRENNTSEETIENATEPETA</sequence>
<name>MHR1_CANAL</name>
<keyword id="KW-0496">Mitochondrion</keyword>
<keyword id="KW-0539">Nucleus</keyword>
<keyword id="KW-1185">Reference proteome</keyword>
<keyword id="KW-0687">Ribonucleoprotein</keyword>
<keyword id="KW-0689">Ribosomal protein</keyword>
<keyword id="KW-0804">Transcription</keyword>
<keyword id="KW-0805">Transcription regulation</keyword>
<proteinExistence type="inferred from homology"/>
<protein>
    <recommendedName>
        <fullName evidence="1">Large ribosomal subunit protein mL67</fullName>
    </recommendedName>
    <alternativeName>
        <fullName>Mitochondrial homologous recombination protein 1</fullName>
    </alternativeName>
</protein>
<reference key="1">
    <citation type="journal article" date="2004" name="Proc. Natl. Acad. Sci. U.S.A.">
        <title>The diploid genome sequence of Candida albicans.</title>
        <authorList>
            <person name="Jones T."/>
            <person name="Federspiel N.A."/>
            <person name="Chibana H."/>
            <person name="Dungan J."/>
            <person name="Kalman S."/>
            <person name="Magee B.B."/>
            <person name="Newport G."/>
            <person name="Thorstenson Y.R."/>
            <person name="Agabian N."/>
            <person name="Magee P.T."/>
            <person name="Davis R.W."/>
            <person name="Scherer S."/>
        </authorList>
    </citation>
    <scope>NUCLEOTIDE SEQUENCE [LARGE SCALE GENOMIC DNA]</scope>
    <source>
        <strain>SC5314 / ATCC MYA-2876</strain>
    </source>
</reference>
<reference key="2">
    <citation type="journal article" date="2007" name="Genome Biol.">
        <title>Assembly of the Candida albicans genome into sixteen supercontigs aligned on the eight chromosomes.</title>
        <authorList>
            <person name="van het Hoog M."/>
            <person name="Rast T.J."/>
            <person name="Martchenko M."/>
            <person name="Grindle S."/>
            <person name="Dignard D."/>
            <person name="Hogues H."/>
            <person name="Cuomo C."/>
            <person name="Berriman M."/>
            <person name="Scherer S."/>
            <person name="Magee B.B."/>
            <person name="Whiteway M."/>
            <person name="Chibana H."/>
            <person name="Nantel A."/>
            <person name="Magee P.T."/>
        </authorList>
    </citation>
    <scope>GENOME REANNOTATION</scope>
    <source>
        <strain>SC5314 / ATCC MYA-2876</strain>
    </source>
</reference>
<reference key="3">
    <citation type="journal article" date="2013" name="Genome Biol.">
        <title>Assembly of a phased diploid Candida albicans genome facilitates allele-specific measurements and provides a simple model for repeat and indel structure.</title>
        <authorList>
            <person name="Muzzey D."/>
            <person name="Schwartz K."/>
            <person name="Weissman J.S."/>
            <person name="Sherlock G."/>
        </authorList>
    </citation>
    <scope>NUCLEOTIDE SEQUENCE [LARGE SCALE GENOMIC DNA]</scope>
    <scope>GENOME REANNOTATION</scope>
    <source>
        <strain>SC5314 / ATCC MYA-2876</strain>
    </source>
</reference>
<dbReference type="EMBL" id="CP017623">
    <property type="protein sequence ID" value="AOW26197.1"/>
    <property type="molecule type" value="Genomic_DNA"/>
</dbReference>
<dbReference type="RefSeq" id="XP_715874.1">
    <property type="nucleotide sequence ID" value="XM_710781.2"/>
</dbReference>
<dbReference type="SMR" id="Q5A2A2"/>
<dbReference type="FunCoup" id="Q5A2A2">
    <property type="interactions" value="154"/>
</dbReference>
<dbReference type="STRING" id="237561.Q5A2A2"/>
<dbReference type="EnsemblFungi" id="C1_05270C_A-T">
    <property type="protein sequence ID" value="C1_05270C_A-T-p1"/>
    <property type="gene ID" value="C1_05270C_A"/>
</dbReference>
<dbReference type="GeneID" id="3642476"/>
<dbReference type="KEGG" id="cal:CAALFM_C105270CA"/>
<dbReference type="CGD" id="CAL0000174972">
    <property type="gene designation" value="orf19.8069"/>
</dbReference>
<dbReference type="VEuPathDB" id="FungiDB:C1_05270C_A"/>
<dbReference type="eggNOG" id="ENOG502QSKX">
    <property type="taxonomic scope" value="Eukaryota"/>
</dbReference>
<dbReference type="HOGENOM" id="CLU_092898_1_0_1"/>
<dbReference type="InParanoid" id="Q5A2A2"/>
<dbReference type="OMA" id="YRPTYTQ"/>
<dbReference type="OrthoDB" id="5333655at2759"/>
<dbReference type="PRO" id="PR:Q5A2A2"/>
<dbReference type="Proteomes" id="UP000000559">
    <property type="component" value="Chromosome 1"/>
</dbReference>
<dbReference type="GO" id="GO:0005739">
    <property type="term" value="C:mitochondrion"/>
    <property type="evidence" value="ECO:0000318"/>
    <property type="project" value="GO_Central"/>
</dbReference>
<dbReference type="GO" id="GO:0005634">
    <property type="term" value="C:nucleus"/>
    <property type="evidence" value="ECO:0007669"/>
    <property type="project" value="UniProtKB-SubCell"/>
</dbReference>
<dbReference type="GO" id="GO:1990904">
    <property type="term" value="C:ribonucleoprotein complex"/>
    <property type="evidence" value="ECO:0007669"/>
    <property type="project" value="UniProtKB-KW"/>
</dbReference>
<dbReference type="GO" id="GO:0005840">
    <property type="term" value="C:ribosome"/>
    <property type="evidence" value="ECO:0007669"/>
    <property type="project" value="UniProtKB-KW"/>
</dbReference>
<dbReference type="GO" id="GO:0000150">
    <property type="term" value="F:DNA strand exchange activity"/>
    <property type="evidence" value="ECO:0007669"/>
    <property type="project" value="InterPro"/>
</dbReference>
<dbReference type="GO" id="GO:0003697">
    <property type="term" value="F:single-stranded DNA binding"/>
    <property type="evidence" value="ECO:0007669"/>
    <property type="project" value="InterPro"/>
</dbReference>
<dbReference type="GO" id="GO:0003735">
    <property type="term" value="F:structural constituent of ribosome"/>
    <property type="evidence" value="ECO:0000318"/>
    <property type="project" value="GO_Central"/>
</dbReference>
<dbReference type="GO" id="GO:0000002">
    <property type="term" value="P:mitochondrial genome maintenance"/>
    <property type="evidence" value="ECO:0007669"/>
    <property type="project" value="InterPro"/>
</dbReference>
<dbReference type="InterPro" id="IPR024629">
    <property type="entry name" value="Ribosomal_mL67"/>
</dbReference>
<dbReference type="PANTHER" id="PTHR28184:SF1">
    <property type="entry name" value="LARGE RIBOSOMAL SUBUNIT PROTEIN ML67"/>
    <property type="match status" value="1"/>
</dbReference>
<dbReference type="PANTHER" id="PTHR28184">
    <property type="entry name" value="MITOCHONDRIAL HOMOLOGOUS RECOMBINATION PROTEIN 1"/>
    <property type="match status" value="1"/>
</dbReference>
<dbReference type="Pfam" id="PF12829">
    <property type="entry name" value="Mhr1"/>
    <property type="match status" value="1"/>
</dbReference>
<organism>
    <name type="scientific">Candida albicans (strain SC5314 / ATCC MYA-2876)</name>
    <name type="common">Yeast</name>
    <dbReference type="NCBI Taxonomy" id="237561"/>
    <lineage>
        <taxon>Eukaryota</taxon>
        <taxon>Fungi</taxon>
        <taxon>Dikarya</taxon>
        <taxon>Ascomycota</taxon>
        <taxon>Saccharomycotina</taxon>
        <taxon>Pichiomycetes</taxon>
        <taxon>Debaryomycetaceae</taxon>
        <taxon>Candida/Lodderomyces clade</taxon>
        <taxon>Candida</taxon>
    </lineage>
</organism>
<accession>Q5A2A2</accession>
<accession>A0A1D8PDJ4</accession>
<evidence type="ECO:0000250" key="1">
    <source>
        <dbReference type="UniProtKB" id="Q06630"/>
    </source>
</evidence>
<evidence type="ECO:0000305" key="2"/>